<name>RL15_YERPE</name>
<protein>
    <recommendedName>
        <fullName evidence="1">Large ribosomal subunit protein uL15</fullName>
    </recommendedName>
    <alternativeName>
        <fullName evidence="3">50S ribosomal protein L15</fullName>
    </alternativeName>
</protein>
<proteinExistence type="inferred from homology"/>
<evidence type="ECO:0000255" key="1">
    <source>
        <dbReference type="HAMAP-Rule" id="MF_01341"/>
    </source>
</evidence>
<evidence type="ECO:0000256" key="2">
    <source>
        <dbReference type="SAM" id="MobiDB-lite"/>
    </source>
</evidence>
<evidence type="ECO:0000305" key="3"/>
<dbReference type="EMBL" id="AL590842">
    <property type="protein sequence ID" value="CAL18911.1"/>
    <property type="molecule type" value="Genomic_DNA"/>
</dbReference>
<dbReference type="EMBL" id="AE009952">
    <property type="protein sequence ID" value="AAM87553.1"/>
    <property type="molecule type" value="Genomic_DNA"/>
</dbReference>
<dbReference type="EMBL" id="AE017042">
    <property type="protein sequence ID" value="AAS60502.1"/>
    <property type="molecule type" value="Genomic_DNA"/>
</dbReference>
<dbReference type="PIR" id="AE0028">
    <property type="entry name" value="AE0028"/>
</dbReference>
<dbReference type="RefSeq" id="WP_002213341.1">
    <property type="nucleotide sequence ID" value="NZ_WUCM01000078.1"/>
</dbReference>
<dbReference type="RefSeq" id="YP_002345309.1">
    <property type="nucleotide sequence ID" value="NC_003143.1"/>
</dbReference>
<dbReference type="SMR" id="Q8ZJ93"/>
<dbReference type="STRING" id="214092.YPO0228"/>
<dbReference type="PaxDb" id="214092-YPO0228"/>
<dbReference type="DNASU" id="1148956"/>
<dbReference type="EnsemblBacteria" id="AAS60502">
    <property type="protein sequence ID" value="AAS60502"/>
    <property type="gene ID" value="YP_0226"/>
</dbReference>
<dbReference type="GeneID" id="96663177"/>
<dbReference type="KEGG" id="ype:YPO0228"/>
<dbReference type="KEGG" id="ypk:y4009"/>
<dbReference type="KEGG" id="ypm:YP_0226"/>
<dbReference type="PATRIC" id="fig|214092.21.peg.457"/>
<dbReference type="eggNOG" id="COG0200">
    <property type="taxonomic scope" value="Bacteria"/>
</dbReference>
<dbReference type="HOGENOM" id="CLU_055188_4_2_6"/>
<dbReference type="OMA" id="WFEGGQM"/>
<dbReference type="OrthoDB" id="9810293at2"/>
<dbReference type="Proteomes" id="UP000000815">
    <property type="component" value="Chromosome"/>
</dbReference>
<dbReference type="Proteomes" id="UP000001019">
    <property type="component" value="Chromosome"/>
</dbReference>
<dbReference type="Proteomes" id="UP000002490">
    <property type="component" value="Chromosome"/>
</dbReference>
<dbReference type="GO" id="GO:0022625">
    <property type="term" value="C:cytosolic large ribosomal subunit"/>
    <property type="evidence" value="ECO:0000318"/>
    <property type="project" value="GO_Central"/>
</dbReference>
<dbReference type="GO" id="GO:0019843">
    <property type="term" value="F:rRNA binding"/>
    <property type="evidence" value="ECO:0007669"/>
    <property type="project" value="UniProtKB-UniRule"/>
</dbReference>
<dbReference type="GO" id="GO:0003735">
    <property type="term" value="F:structural constituent of ribosome"/>
    <property type="evidence" value="ECO:0000318"/>
    <property type="project" value="GO_Central"/>
</dbReference>
<dbReference type="GO" id="GO:0006412">
    <property type="term" value="P:translation"/>
    <property type="evidence" value="ECO:0007669"/>
    <property type="project" value="UniProtKB-UniRule"/>
</dbReference>
<dbReference type="FunFam" id="3.100.10.10:FF:000003">
    <property type="entry name" value="50S ribosomal protein L15"/>
    <property type="match status" value="1"/>
</dbReference>
<dbReference type="Gene3D" id="3.100.10.10">
    <property type="match status" value="1"/>
</dbReference>
<dbReference type="HAMAP" id="MF_01341">
    <property type="entry name" value="Ribosomal_uL15"/>
    <property type="match status" value="1"/>
</dbReference>
<dbReference type="InterPro" id="IPR030878">
    <property type="entry name" value="Ribosomal_uL15"/>
</dbReference>
<dbReference type="InterPro" id="IPR021131">
    <property type="entry name" value="Ribosomal_uL15/eL18"/>
</dbReference>
<dbReference type="InterPro" id="IPR036227">
    <property type="entry name" value="Ribosomal_uL15/eL18_sf"/>
</dbReference>
<dbReference type="InterPro" id="IPR005749">
    <property type="entry name" value="Ribosomal_uL15_bac-type"/>
</dbReference>
<dbReference type="InterPro" id="IPR001196">
    <property type="entry name" value="Ribosomal_uL15_CS"/>
</dbReference>
<dbReference type="NCBIfam" id="TIGR01071">
    <property type="entry name" value="rplO_bact"/>
    <property type="match status" value="1"/>
</dbReference>
<dbReference type="PANTHER" id="PTHR12934">
    <property type="entry name" value="50S RIBOSOMAL PROTEIN L15"/>
    <property type="match status" value="1"/>
</dbReference>
<dbReference type="PANTHER" id="PTHR12934:SF11">
    <property type="entry name" value="LARGE RIBOSOMAL SUBUNIT PROTEIN UL15M"/>
    <property type="match status" value="1"/>
</dbReference>
<dbReference type="Pfam" id="PF00828">
    <property type="entry name" value="Ribosomal_L27A"/>
    <property type="match status" value="1"/>
</dbReference>
<dbReference type="SUPFAM" id="SSF52080">
    <property type="entry name" value="Ribosomal proteins L15p and L18e"/>
    <property type="match status" value="1"/>
</dbReference>
<dbReference type="PROSITE" id="PS00475">
    <property type="entry name" value="RIBOSOMAL_L15"/>
    <property type="match status" value="1"/>
</dbReference>
<organism>
    <name type="scientific">Yersinia pestis</name>
    <dbReference type="NCBI Taxonomy" id="632"/>
    <lineage>
        <taxon>Bacteria</taxon>
        <taxon>Pseudomonadati</taxon>
        <taxon>Pseudomonadota</taxon>
        <taxon>Gammaproteobacteria</taxon>
        <taxon>Enterobacterales</taxon>
        <taxon>Yersiniaceae</taxon>
        <taxon>Yersinia</taxon>
    </lineage>
</organism>
<gene>
    <name evidence="1" type="primary">rplO</name>
    <name type="ordered locus">YPO0228</name>
    <name type="ordered locus">y4009</name>
    <name type="ordered locus">YP_0226</name>
</gene>
<accession>Q8ZJ93</accession>
<accession>Q0WK79</accession>
<accession>Q74XY3</accession>
<accession>Q7CFT1</accession>
<reference key="1">
    <citation type="journal article" date="2001" name="Nature">
        <title>Genome sequence of Yersinia pestis, the causative agent of plague.</title>
        <authorList>
            <person name="Parkhill J."/>
            <person name="Wren B.W."/>
            <person name="Thomson N.R."/>
            <person name="Titball R.W."/>
            <person name="Holden M.T.G."/>
            <person name="Prentice M.B."/>
            <person name="Sebaihia M."/>
            <person name="James K.D."/>
            <person name="Churcher C.M."/>
            <person name="Mungall K.L."/>
            <person name="Baker S."/>
            <person name="Basham D."/>
            <person name="Bentley S.D."/>
            <person name="Brooks K."/>
            <person name="Cerdeno-Tarraga A.-M."/>
            <person name="Chillingworth T."/>
            <person name="Cronin A."/>
            <person name="Davies R.M."/>
            <person name="Davis P."/>
            <person name="Dougan G."/>
            <person name="Feltwell T."/>
            <person name="Hamlin N."/>
            <person name="Holroyd S."/>
            <person name="Jagels K."/>
            <person name="Karlyshev A.V."/>
            <person name="Leather S."/>
            <person name="Moule S."/>
            <person name="Oyston P.C.F."/>
            <person name="Quail M.A."/>
            <person name="Rutherford K.M."/>
            <person name="Simmonds M."/>
            <person name="Skelton J."/>
            <person name="Stevens K."/>
            <person name="Whitehead S."/>
            <person name="Barrell B.G."/>
        </authorList>
    </citation>
    <scope>NUCLEOTIDE SEQUENCE [LARGE SCALE GENOMIC DNA]</scope>
    <source>
        <strain>CO-92 / Biovar Orientalis</strain>
    </source>
</reference>
<reference key="2">
    <citation type="journal article" date="2002" name="J. Bacteriol.">
        <title>Genome sequence of Yersinia pestis KIM.</title>
        <authorList>
            <person name="Deng W."/>
            <person name="Burland V."/>
            <person name="Plunkett G. III"/>
            <person name="Boutin A."/>
            <person name="Mayhew G.F."/>
            <person name="Liss P."/>
            <person name="Perna N.T."/>
            <person name="Rose D.J."/>
            <person name="Mau B."/>
            <person name="Zhou S."/>
            <person name="Schwartz D.C."/>
            <person name="Fetherston J.D."/>
            <person name="Lindler L.E."/>
            <person name="Brubaker R.R."/>
            <person name="Plano G.V."/>
            <person name="Straley S.C."/>
            <person name="McDonough K.A."/>
            <person name="Nilles M.L."/>
            <person name="Matson J.S."/>
            <person name="Blattner F.R."/>
            <person name="Perry R.D."/>
        </authorList>
    </citation>
    <scope>NUCLEOTIDE SEQUENCE [LARGE SCALE GENOMIC DNA]</scope>
    <source>
        <strain>KIM10+ / Biovar Mediaevalis</strain>
    </source>
</reference>
<reference key="3">
    <citation type="journal article" date="2004" name="DNA Res.">
        <title>Complete genome sequence of Yersinia pestis strain 91001, an isolate avirulent to humans.</title>
        <authorList>
            <person name="Song Y."/>
            <person name="Tong Z."/>
            <person name="Wang J."/>
            <person name="Wang L."/>
            <person name="Guo Z."/>
            <person name="Han Y."/>
            <person name="Zhang J."/>
            <person name="Pei D."/>
            <person name="Zhou D."/>
            <person name="Qin H."/>
            <person name="Pang X."/>
            <person name="Han Y."/>
            <person name="Zhai J."/>
            <person name="Li M."/>
            <person name="Cui B."/>
            <person name="Qi Z."/>
            <person name="Jin L."/>
            <person name="Dai R."/>
            <person name="Chen F."/>
            <person name="Li S."/>
            <person name="Ye C."/>
            <person name="Du Z."/>
            <person name="Lin W."/>
            <person name="Wang J."/>
            <person name="Yu J."/>
            <person name="Yang H."/>
            <person name="Wang J."/>
            <person name="Huang P."/>
            <person name="Yang R."/>
        </authorList>
    </citation>
    <scope>NUCLEOTIDE SEQUENCE [LARGE SCALE GENOMIC DNA]</scope>
    <source>
        <strain>91001 / Biovar Mediaevalis</strain>
    </source>
</reference>
<keyword id="KW-1185">Reference proteome</keyword>
<keyword id="KW-0687">Ribonucleoprotein</keyword>
<keyword id="KW-0689">Ribosomal protein</keyword>
<keyword id="KW-0694">RNA-binding</keyword>
<keyword id="KW-0699">rRNA-binding</keyword>
<feature type="chain" id="PRO_0000104855" description="Large ribosomal subunit protein uL15">
    <location>
        <begin position="1"/>
        <end position="144"/>
    </location>
</feature>
<feature type="region of interest" description="Disordered" evidence="2">
    <location>
        <begin position="1"/>
        <end position="52"/>
    </location>
</feature>
<feature type="compositionally biased region" description="Gly residues" evidence="2">
    <location>
        <begin position="21"/>
        <end position="31"/>
    </location>
</feature>
<comment type="function">
    <text evidence="1">Binds to the 23S rRNA.</text>
</comment>
<comment type="subunit">
    <text evidence="1">Part of the 50S ribosomal subunit.</text>
</comment>
<comment type="similarity">
    <text evidence="1">Belongs to the universal ribosomal protein uL15 family.</text>
</comment>
<sequence length="144" mass="15207">MRLNTLSPAEGAKHAPKRVGRGIGSGLGKTAGRGHKGQNSRSGGGVRRGFEGGQMPLYRRLPKFGFTSRKAMITAEVRLSELALVEGDVIDLNTLKAANVVGIQMEFVKVILSGEVNRAVTLRGLRVTKGARAAIEAAGGKIEE</sequence>